<gene>
    <name evidence="1" type="primary">gpmB</name>
    <name type="ordered locus">Z5997</name>
    <name type="ordered locus">ECs5353</name>
</gene>
<reference key="1">
    <citation type="journal article" date="2001" name="Nature">
        <title>Genome sequence of enterohaemorrhagic Escherichia coli O157:H7.</title>
        <authorList>
            <person name="Perna N.T."/>
            <person name="Plunkett G. III"/>
            <person name="Burland V."/>
            <person name="Mau B."/>
            <person name="Glasner J.D."/>
            <person name="Rose D.J."/>
            <person name="Mayhew G.F."/>
            <person name="Evans P.S."/>
            <person name="Gregor J."/>
            <person name="Kirkpatrick H.A."/>
            <person name="Posfai G."/>
            <person name="Hackett J."/>
            <person name="Klink S."/>
            <person name="Boutin A."/>
            <person name="Shao Y."/>
            <person name="Miller L."/>
            <person name="Grotbeck E.J."/>
            <person name="Davis N.W."/>
            <person name="Lim A."/>
            <person name="Dimalanta E.T."/>
            <person name="Potamousis K."/>
            <person name="Apodaca J."/>
            <person name="Anantharaman T.S."/>
            <person name="Lin J."/>
            <person name="Yen G."/>
            <person name="Schwartz D.C."/>
            <person name="Welch R.A."/>
            <person name="Blattner F.R."/>
        </authorList>
    </citation>
    <scope>NUCLEOTIDE SEQUENCE [LARGE SCALE GENOMIC DNA]</scope>
    <source>
        <strain>O157:H7 / EDL933 / ATCC 700927 / EHEC</strain>
    </source>
</reference>
<reference key="2">
    <citation type="journal article" date="2001" name="DNA Res.">
        <title>Complete genome sequence of enterohemorrhagic Escherichia coli O157:H7 and genomic comparison with a laboratory strain K-12.</title>
        <authorList>
            <person name="Hayashi T."/>
            <person name="Makino K."/>
            <person name="Ohnishi M."/>
            <person name="Kurokawa K."/>
            <person name="Ishii K."/>
            <person name="Yokoyama K."/>
            <person name="Han C.-G."/>
            <person name="Ohtsubo E."/>
            <person name="Nakayama K."/>
            <person name="Murata T."/>
            <person name="Tanaka M."/>
            <person name="Tobe T."/>
            <person name="Iida T."/>
            <person name="Takami H."/>
            <person name="Honda T."/>
            <person name="Sasakawa C."/>
            <person name="Ogasawara N."/>
            <person name="Yasunaga T."/>
            <person name="Kuhara S."/>
            <person name="Shiba T."/>
            <person name="Hattori M."/>
            <person name="Shinagawa H."/>
        </authorList>
    </citation>
    <scope>NUCLEOTIDE SEQUENCE [LARGE SCALE GENOMIC DNA]</scope>
    <source>
        <strain>O157:H7 / Sakai / RIMD 0509952 / EHEC</strain>
    </source>
</reference>
<sequence length="215" mass="24065">MLQVYLVRHGETQWNAERRIQGQSDSPLTAKGEQQAMQVATRAKELGITHIISSDLGRTRRTAEIIAQACGCDIIFDSRLRELNMGVLEKRHIDSLTEEEENWRRQLVNGTVDGRIPEGESMQELSDRVNAALESCRDLPQGSRPLLVSHGIALGCLVSTILGLPAWAERRLRLRNCSISRVDYQESLWLASGWVVETAGDISHLDAPALDELQR</sequence>
<organism>
    <name type="scientific">Escherichia coli O157:H7</name>
    <dbReference type="NCBI Taxonomy" id="83334"/>
    <lineage>
        <taxon>Bacteria</taxon>
        <taxon>Pseudomonadati</taxon>
        <taxon>Pseudomonadota</taxon>
        <taxon>Gammaproteobacteria</taxon>
        <taxon>Enterobacterales</taxon>
        <taxon>Enterobacteriaceae</taxon>
        <taxon>Escherichia</taxon>
    </lineage>
</organism>
<comment type="catalytic activity">
    <reaction evidence="1">
        <text>(2R)-2-phosphoglycerate = (2R)-3-phosphoglycerate</text>
        <dbReference type="Rhea" id="RHEA:15901"/>
        <dbReference type="ChEBI" id="CHEBI:58272"/>
        <dbReference type="ChEBI" id="CHEBI:58289"/>
    </reaction>
</comment>
<comment type="pathway">
    <text evidence="1">Carbohydrate degradation; glycolysis; pyruvate from D-glyceraldehyde 3-phosphate: step 3/5.</text>
</comment>
<comment type="similarity">
    <text evidence="1">Belongs to the phosphoglycerate mutase family. GpmB subfamily.</text>
</comment>
<name>GPMB_ECO57</name>
<evidence type="ECO:0000255" key="1">
    <source>
        <dbReference type="HAMAP-Rule" id="MF_01040"/>
    </source>
</evidence>
<evidence type="ECO:0000305" key="2"/>
<feature type="chain" id="PRO_0000179947" description="Probable phosphoglycerate mutase GpmB">
    <location>
        <begin position="1"/>
        <end position="215"/>
    </location>
</feature>
<feature type="active site" description="Tele-phosphohistidine intermediate" evidence="1">
    <location>
        <position position="9"/>
    </location>
</feature>
<feature type="active site" description="Proton donor/acceptor" evidence="1">
    <location>
        <position position="82"/>
    </location>
</feature>
<feature type="binding site" evidence="1">
    <location>
        <begin position="8"/>
        <end position="15"/>
    </location>
    <ligand>
        <name>substrate</name>
    </ligand>
</feature>
<feature type="binding site" evidence="1">
    <location>
        <begin position="21"/>
        <end position="22"/>
    </location>
    <ligand>
        <name>substrate</name>
    </ligand>
</feature>
<feature type="binding site" evidence="1">
    <location>
        <position position="58"/>
    </location>
    <ligand>
        <name>substrate</name>
    </ligand>
</feature>
<feature type="binding site" evidence="1">
    <location>
        <position position="60"/>
    </location>
    <ligand>
        <name>substrate</name>
    </ligand>
</feature>
<feature type="binding site" evidence="1">
    <location>
        <begin position="82"/>
        <end position="85"/>
    </location>
    <ligand>
        <name>substrate</name>
    </ligand>
</feature>
<feature type="binding site" evidence="1">
    <location>
        <begin position="104"/>
        <end position="105"/>
    </location>
    <ligand>
        <name>substrate</name>
    </ligand>
</feature>
<feature type="binding site" evidence="1">
    <location>
        <begin position="151"/>
        <end position="152"/>
    </location>
    <ligand>
        <name>substrate</name>
    </ligand>
</feature>
<feature type="site" description="Transition state stabilizer" evidence="1">
    <location>
        <position position="150"/>
    </location>
</feature>
<feature type="sequence conflict" description="In Ref. 1; AAG59575." evidence="2" ref="1">
    <original>Q</original>
    <variation>H</variation>
    <location>
        <position position="35"/>
    </location>
</feature>
<dbReference type="EC" id="5.4.2.-" evidence="1"/>
<dbReference type="EMBL" id="AE005174">
    <property type="protein sequence ID" value="AAG59575.1"/>
    <property type="molecule type" value="Genomic_DNA"/>
</dbReference>
<dbReference type="EMBL" id="BA000007">
    <property type="protein sequence ID" value="BAB38776.1"/>
    <property type="molecule type" value="Genomic_DNA"/>
</dbReference>
<dbReference type="PIR" id="A91298">
    <property type="entry name" value="A91298"/>
</dbReference>
<dbReference type="RefSeq" id="WP_000942344.1">
    <property type="nucleotide sequence ID" value="NZ_VOAI01000002.1"/>
</dbReference>
<dbReference type="SMR" id="P0A7A3"/>
<dbReference type="STRING" id="155864.Z5997"/>
<dbReference type="GeneID" id="93777450"/>
<dbReference type="KEGG" id="ece:Z5997"/>
<dbReference type="KEGG" id="ecs:ECs_5353"/>
<dbReference type="PATRIC" id="fig|386585.9.peg.5601"/>
<dbReference type="eggNOG" id="COG0406">
    <property type="taxonomic scope" value="Bacteria"/>
</dbReference>
<dbReference type="HOGENOM" id="CLU_033323_9_5_6"/>
<dbReference type="OMA" id="TEWNVAR"/>
<dbReference type="UniPathway" id="UPA00109">
    <property type="reaction ID" value="UER00186"/>
</dbReference>
<dbReference type="Proteomes" id="UP000000558">
    <property type="component" value="Chromosome"/>
</dbReference>
<dbReference type="Proteomes" id="UP000002519">
    <property type="component" value="Chromosome"/>
</dbReference>
<dbReference type="GO" id="GO:0005737">
    <property type="term" value="C:cytoplasm"/>
    <property type="evidence" value="ECO:0007669"/>
    <property type="project" value="TreeGrafter"/>
</dbReference>
<dbReference type="GO" id="GO:0016791">
    <property type="term" value="F:phosphatase activity"/>
    <property type="evidence" value="ECO:0007669"/>
    <property type="project" value="TreeGrafter"/>
</dbReference>
<dbReference type="GO" id="GO:0004619">
    <property type="term" value="F:phosphoglycerate mutase activity"/>
    <property type="evidence" value="ECO:0007669"/>
    <property type="project" value="UniProtKB-UniRule"/>
</dbReference>
<dbReference type="GO" id="GO:0006096">
    <property type="term" value="P:glycolytic process"/>
    <property type="evidence" value="ECO:0007669"/>
    <property type="project" value="UniProtKB-UniRule"/>
</dbReference>
<dbReference type="CDD" id="cd07067">
    <property type="entry name" value="HP_PGM_like"/>
    <property type="match status" value="1"/>
</dbReference>
<dbReference type="Gene3D" id="3.40.50.1240">
    <property type="entry name" value="Phosphoglycerate mutase-like"/>
    <property type="match status" value="1"/>
</dbReference>
<dbReference type="HAMAP" id="MF_01040">
    <property type="entry name" value="PGAM_GpmB"/>
    <property type="match status" value="1"/>
</dbReference>
<dbReference type="InterPro" id="IPR013078">
    <property type="entry name" value="His_Pase_superF_clade-1"/>
</dbReference>
<dbReference type="InterPro" id="IPR029033">
    <property type="entry name" value="His_PPase_superfam"/>
</dbReference>
<dbReference type="InterPro" id="IPR001345">
    <property type="entry name" value="PG/BPGM_mutase_AS"/>
</dbReference>
<dbReference type="InterPro" id="IPR050275">
    <property type="entry name" value="PGM_Phosphatase"/>
</dbReference>
<dbReference type="InterPro" id="IPR023086">
    <property type="entry name" value="Phosphoglycerate_mutase_GpmB"/>
</dbReference>
<dbReference type="NCBIfam" id="NF002901">
    <property type="entry name" value="PRK03482.1"/>
    <property type="match status" value="1"/>
</dbReference>
<dbReference type="PANTHER" id="PTHR48100">
    <property type="entry name" value="BROAD-SPECIFICITY PHOSPHATASE YOR283W-RELATED"/>
    <property type="match status" value="1"/>
</dbReference>
<dbReference type="PANTHER" id="PTHR48100:SF1">
    <property type="entry name" value="HISTIDINE PHOSPHATASE FAMILY PROTEIN-RELATED"/>
    <property type="match status" value="1"/>
</dbReference>
<dbReference type="Pfam" id="PF00300">
    <property type="entry name" value="His_Phos_1"/>
    <property type="match status" value="1"/>
</dbReference>
<dbReference type="SMART" id="SM00855">
    <property type="entry name" value="PGAM"/>
    <property type="match status" value="1"/>
</dbReference>
<dbReference type="SUPFAM" id="SSF53254">
    <property type="entry name" value="Phosphoglycerate mutase-like"/>
    <property type="match status" value="1"/>
</dbReference>
<dbReference type="PROSITE" id="PS00175">
    <property type="entry name" value="PG_MUTASE"/>
    <property type="match status" value="1"/>
</dbReference>
<protein>
    <recommendedName>
        <fullName evidence="1">Probable phosphoglycerate mutase GpmB</fullName>
        <ecNumber evidence="1">5.4.2.-</ecNumber>
    </recommendedName>
    <alternativeName>
        <fullName evidence="1">PGAM</fullName>
    </alternativeName>
    <alternativeName>
        <fullName evidence="1">Phosphoglyceromutase</fullName>
    </alternativeName>
</protein>
<accession>P0A7A3</accession>
<accession>P36942</accession>
<keyword id="KW-0324">Glycolysis</keyword>
<keyword id="KW-0413">Isomerase</keyword>
<keyword id="KW-1185">Reference proteome</keyword>
<proteinExistence type="inferred from homology"/>